<keyword id="KW-0285">Flavoprotein</keyword>
<keyword id="KW-0288">FMN</keyword>
<keyword id="KW-0503">Monooxygenase</keyword>
<keyword id="KW-0560">Oxidoreductase</keyword>
<feature type="chain" id="PRO_1000066828" description="Alkanesulfonate monooxygenase">
    <location>
        <begin position="1"/>
        <end position="382"/>
    </location>
</feature>
<evidence type="ECO:0000255" key="1">
    <source>
        <dbReference type="HAMAP-Rule" id="MF_01229"/>
    </source>
</evidence>
<sequence length="382" mass="41422">MSLNIFWFLPTHGDGKYLGTTEGARAVDHGYLSQIAQAADRLGFGGVLIPTGRSCEDSWLVAASLIPVTERLKFLVALRPGIISPTVAARQAATLDRLSNGRALFNLVTGGDPDELAGDGLHLNHQERYEASVEFTRIWRKVLEGEVVDYDGKHLQVKGAKLLYPPIQQPRPPLYFGGSSDAAQDLAAEQVELYLTWGEPPAAVAEKIAQVREKAAAQGREVRFGIRLHVIVRETNEEAWAAADKLISHLDDDTIARAQASLARFDSVGQQRMAALHGGKRDKLEVAPNLWAGVGLVRGGAGTALVGDGPTVAARVKEYADLGIDTFIFSGYPHLEESYRVAELLFPHLDVQRPEQPKSGGYVSPFGEMVANDILPKSVSQS</sequence>
<organism>
    <name type="scientific">Pseudomonas entomophila (strain L48)</name>
    <dbReference type="NCBI Taxonomy" id="384676"/>
    <lineage>
        <taxon>Bacteria</taxon>
        <taxon>Pseudomonadati</taxon>
        <taxon>Pseudomonadota</taxon>
        <taxon>Gammaproteobacteria</taxon>
        <taxon>Pseudomonadales</taxon>
        <taxon>Pseudomonadaceae</taxon>
        <taxon>Pseudomonas</taxon>
    </lineage>
</organism>
<dbReference type="EC" id="1.14.14.5" evidence="1"/>
<dbReference type="EMBL" id="CT573326">
    <property type="protein sequence ID" value="CAK13186.1"/>
    <property type="molecule type" value="Genomic_DNA"/>
</dbReference>
<dbReference type="RefSeq" id="WP_011531647.1">
    <property type="nucleotide sequence ID" value="NC_008027.1"/>
</dbReference>
<dbReference type="SMR" id="Q1IGL6"/>
<dbReference type="STRING" id="384676.PSEEN0219"/>
<dbReference type="GeneID" id="32803566"/>
<dbReference type="KEGG" id="pen:PSEEN0219"/>
<dbReference type="eggNOG" id="COG2141">
    <property type="taxonomic scope" value="Bacteria"/>
</dbReference>
<dbReference type="HOGENOM" id="CLU_027853_1_0_6"/>
<dbReference type="OrthoDB" id="9814695at2"/>
<dbReference type="Proteomes" id="UP000000658">
    <property type="component" value="Chromosome"/>
</dbReference>
<dbReference type="GO" id="GO:0008726">
    <property type="term" value="F:alkanesulfonate monooxygenase activity"/>
    <property type="evidence" value="ECO:0007669"/>
    <property type="project" value="UniProtKB-UniRule"/>
</dbReference>
<dbReference type="GO" id="GO:0046306">
    <property type="term" value="P:alkanesulfonate catabolic process"/>
    <property type="evidence" value="ECO:0007669"/>
    <property type="project" value="TreeGrafter"/>
</dbReference>
<dbReference type="CDD" id="cd01094">
    <property type="entry name" value="Alkanesulfonate_monoxygenase"/>
    <property type="match status" value="1"/>
</dbReference>
<dbReference type="FunFam" id="3.20.20.30:FF:000001">
    <property type="entry name" value="Alkanesulfonate monooxygenase"/>
    <property type="match status" value="1"/>
</dbReference>
<dbReference type="Gene3D" id="3.20.20.30">
    <property type="entry name" value="Luciferase-like domain"/>
    <property type="match status" value="1"/>
</dbReference>
<dbReference type="HAMAP" id="MF_01229">
    <property type="entry name" value="Alkanesulf_monooxygen"/>
    <property type="match status" value="1"/>
</dbReference>
<dbReference type="InterPro" id="IPR019911">
    <property type="entry name" value="Alkanesulphonate_mOase_FMN-dep"/>
</dbReference>
<dbReference type="InterPro" id="IPR011251">
    <property type="entry name" value="Luciferase-like_dom"/>
</dbReference>
<dbReference type="InterPro" id="IPR036661">
    <property type="entry name" value="Luciferase-like_sf"/>
</dbReference>
<dbReference type="InterPro" id="IPR050172">
    <property type="entry name" value="SsuD_RutA_monooxygenase"/>
</dbReference>
<dbReference type="NCBIfam" id="TIGR03565">
    <property type="entry name" value="alk_sulf_monoox"/>
    <property type="match status" value="1"/>
</dbReference>
<dbReference type="NCBIfam" id="NF001939">
    <property type="entry name" value="PRK00719.1"/>
    <property type="match status" value="1"/>
</dbReference>
<dbReference type="PANTHER" id="PTHR42847">
    <property type="entry name" value="ALKANESULFONATE MONOOXYGENASE"/>
    <property type="match status" value="1"/>
</dbReference>
<dbReference type="PANTHER" id="PTHR42847:SF4">
    <property type="entry name" value="ALKANESULFONATE MONOOXYGENASE-RELATED"/>
    <property type="match status" value="1"/>
</dbReference>
<dbReference type="Pfam" id="PF00296">
    <property type="entry name" value="Bac_luciferase"/>
    <property type="match status" value="1"/>
</dbReference>
<dbReference type="SUPFAM" id="SSF51679">
    <property type="entry name" value="Bacterial luciferase-like"/>
    <property type="match status" value="1"/>
</dbReference>
<protein>
    <recommendedName>
        <fullName evidence="1">Alkanesulfonate monooxygenase</fullName>
        <ecNumber evidence="1">1.14.14.5</ecNumber>
    </recommendedName>
    <alternativeName>
        <fullName evidence="1">FMNH2-dependent aliphatic sulfonate monooxygenase</fullName>
    </alternativeName>
</protein>
<comment type="function">
    <text evidence="1">Catalyzes the desulfonation of aliphatic sulfonates.</text>
</comment>
<comment type="catalytic activity">
    <reaction evidence="1">
        <text>an alkanesulfonate + FMNH2 + O2 = an aldehyde + FMN + sulfite + H2O + 2 H(+)</text>
        <dbReference type="Rhea" id="RHEA:23064"/>
        <dbReference type="ChEBI" id="CHEBI:15377"/>
        <dbReference type="ChEBI" id="CHEBI:15378"/>
        <dbReference type="ChEBI" id="CHEBI:15379"/>
        <dbReference type="ChEBI" id="CHEBI:17359"/>
        <dbReference type="ChEBI" id="CHEBI:17478"/>
        <dbReference type="ChEBI" id="CHEBI:57618"/>
        <dbReference type="ChEBI" id="CHEBI:58210"/>
        <dbReference type="ChEBI" id="CHEBI:134249"/>
        <dbReference type="EC" id="1.14.14.5"/>
    </reaction>
</comment>
<comment type="similarity">
    <text evidence="1">Belongs to the SsuD family.</text>
</comment>
<gene>
    <name evidence="1" type="primary">ssuD</name>
    <name type="ordered locus">PSEEN0219</name>
</gene>
<proteinExistence type="inferred from homology"/>
<accession>Q1IGL6</accession>
<name>SSUD_PSEE4</name>
<reference key="1">
    <citation type="journal article" date="2006" name="Nat. Biotechnol.">
        <title>Complete genome sequence of the entomopathogenic and metabolically versatile soil bacterium Pseudomonas entomophila.</title>
        <authorList>
            <person name="Vodovar N."/>
            <person name="Vallenet D."/>
            <person name="Cruveiller S."/>
            <person name="Rouy Z."/>
            <person name="Barbe V."/>
            <person name="Acosta C."/>
            <person name="Cattolico L."/>
            <person name="Jubin C."/>
            <person name="Lajus A."/>
            <person name="Segurens B."/>
            <person name="Vacherie B."/>
            <person name="Wincker P."/>
            <person name="Weissenbach J."/>
            <person name="Lemaitre B."/>
            <person name="Medigue C."/>
            <person name="Boccard F."/>
        </authorList>
    </citation>
    <scope>NUCLEOTIDE SEQUENCE [LARGE SCALE GENOMIC DNA]</scope>
    <source>
        <strain>L48</strain>
    </source>
</reference>